<reference key="1">
    <citation type="journal article" date="2008" name="BMC Evol. Biol.">
        <title>Adaptive evolution of SCML1 in primates, a gene involved in male reproduction.</title>
        <authorList>
            <person name="Wu H.-H."/>
            <person name="Su B."/>
        </authorList>
    </citation>
    <scope>NUCLEOTIDE SEQUENCE [GENOMIC DNA]</scope>
</reference>
<comment type="function">
    <text evidence="1">Putative Polycomb group (PcG) protein. PcG proteins act by forming multiprotein complexes, which are required to maintain the transcriptionally repressive state of homeotic genes throughout development. May be involved in spermatogenesis during sexual maturation (By similarity).</text>
</comment>
<comment type="subcellular location">
    <subcellularLocation>
        <location evidence="5">Nucleus</location>
    </subcellularLocation>
</comment>
<comment type="similarity">
    <text evidence="5">Belongs to the SCM family.</text>
</comment>
<proteinExistence type="inferred from homology"/>
<organism>
    <name type="scientific">Gorilla gorilla gorilla</name>
    <name type="common">Western lowland gorilla</name>
    <dbReference type="NCBI Taxonomy" id="9595"/>
    <lineage>
        <taxon>Eukaryota</taxon>
        <taxon>Metazoa</taxon>
        <taxon>Chordata</taxon>
        <taxon>Craniata</taxon>
        <taxon>Vertebrata</taxon>
        <taxon>Euteleostomi</taxon>
        <taxon>Mammalia</taxon>
        <taxon>Eutheria</taxon>
        <taxon>Euarchontoglires</taxon>
        <taxon>Primates</taxon>
        <taxon>Haplorrhini</taxon>
        <taxon>Catarrhini</taxon>
        <taxon>Hominidae</taxon>
        <taxon>Gorilla</taxon>
    </lineage>
</organism>
<name>SCML1_GORGO</name>
<sequence length="329" mass="37570">MMSNSSSEIDVVKTRIPTYDEDDDTILYAYETKPEFVNKEPNIVSDASCNTEEQLKTVNDVLIHCQVIYDAMQNLDKKIDVIRRKVSKIQRFHARFLWANRKRYGYKKHSYRLVKKLKLQKMKKNEVYETFSYPESYSPTLPVSRRENNSPSNLPRPSFCMEEYQRAEPEEDPILSRTLSPVHPSDFSEHNYQPYYASDGAAYGSSSGLCLGNPRADSIHDTYSTDQASAAPPSVTRSPFENDGYIEKGSITKHPSTWSVEAVVLFLKQTDPLALCPLVDLFRSHEIDGKALLLLTSDVLLKHLGVKLGTAVKLCYYIDRLKQGKCFEN</sequence>
<evidence type="ECO:0000250" key="1"/>
<evidence type="ECO:0000250" key="2">
    <source>
        <dbReference type="UniProtKB" id="Q9UN30"/>
    </source>
</evidence>
<evidence type="ECO:0000255" key="3">
    <source>
        <dbReference type="PROSITE-ProRule" id="PRU00184"/>
    </source>
</evidence>
<evidence type="ECO:0000256" key="4">
    <source>
        <dbReference type="SAM" id="MobiDB-lite"/>
    </source>
</evidence>
<evidence type="ECO:0000305" key="5"/>
<dbReference type="EMBL" id="EU370782">
    <property type="protein sequence ID" value="ABY68577.1"/>
    <property type="molecule type" value="Genomic_DNA"/>
</dbReference>
<dbReference type="SMR" id="B0FZN8"/>
<dbReference type="FunCoup" id="B0FZN8">
    <property type="interactions" value="206"/>
</dbReference>
<dbReference type="STRING" id="9593.ENSGGOP00000003800"/>
<dbReference type="eggNOG" id="KOG3766">
    <property type="taxonomic scope" value="Eukaryota"/>
</dbReference>
<dbReference type="InParanoid" id="B0FZN8"/>
<dbReference type="Proteomes" id="UP000001519">
    <property type="component" value="Unplaced"/>
</dbReference>
<dbReference type="GO" id="GO:0005634">
    <property type="term" value="C:nucleus"/>
    <property type="evidence" value="ECO:0000318"/>
    <property type="project" value="GO_Central"/>
</dbReference>
<dbReference type="GO" id="GO:0003682">
    <property type="term" value="F:chromatin binding"/>
    <property type="evidence" value="ECO:0000318"/>
    <property type="project" value="GO_Central"/>
</dbReference>
<dbReference type="GO" id="GO:0042393">
    <property type="term" value="F:histone binding"/>
    <property type="evidence" value="ECO:0000318"/>
    <property type="project" value="GO_Central"/>
</dbReference>
<dbReference type="GO" id="GO:0045892">
    <property type="term" value="P:negative regulation of DNA-templated transcription"/>
    <property type="evidence" value="ECO:0000318"/>
    <property type="project" value="GO_Central"/>
</dbReference>
<dbReference type="CDD" id="cd09578">
    <property type="entry name" value="SAM_Scm"/>
    <property type="match status" value="1"/>
</dbReference>
<dbReference type="FunFam" id="1.10.150.50:FF:000018">
    <property type="entry name" value="Polycomb protein scmh1 isoform 4"/>
    <property type="match status" value="1"/>
</dbReference>
<dbReference type="Gene3D" id="1.10.150.50">
    <property type="entry name" value="Transcription Factor, Ets-1"/>
    <property type="match status" value="1"/>
</dbReference>
<dbReference type="InterPro" id="IPR001660">
    <property type="entry name" value="SAM"/>
</dbReference>
<dbReference type="InterPro" id="IPR013761">
    <property type="entry name" value="SAM/pointed_sf"/>
</dbReference>
<dbReference type="InterPro" id="IPR047531">
    <property type="entry name" value="SAM_Scm-like"/>
</dbReference>
<dbReference type="PANTHER" id="PTHR47305">
    <property type="entry name" value="BEN DOMAIN-CONTAINING PROTEIN 2"/>
    <property type="match status" value="1"/>
</dbReference>
<dbReference type="PANTHER" id="PTHR47305:SF2">
    <property type="entry name" value="SAM DOMAIN-CONTAINING PROTEIN"/>
    <property type="match status" value="1"/>
</dbReference>
<dbReference type="Pfam" id="PF00536">
    <property type="entry name" value="SAM_1"/>
    <property type="match status" value="1"/>
</dbReference>
<dbReference type="SMART" id="SM00454">
    <property type="entry name" value="SAM"/>
    <property type="match status" value="1"/>
</dbReference>
<dbReference type="SUPFAM" id="SSF47769">
    <property type="entry name" value="SAM/Pointed domain"/>
    <property type="match status" value="1"/>
</dbReference>
<dbReference type="PROSITE" id="PS50105">
    <property type="entry name" value="SAM_DOMAIN"/>
    <property type="match status" value="1"/>
</dbReference>
<gene>
    <name type="primary">SCML1</name>
</gene>
<accession>B0FZN8</accession>
<keyword id="KW-0539">Nucleus</keyword>
<keyword id="KW-0597">Phosphoprotein</keyword>
<keyword id="KW-1185">Reference proteome</keyword>
<keyword id="KW-0678">Repressor</keyword>
<keyword id="KW-0804">Transcription</keyword>
<keyword id="KW-0805">Transcription regulation</keyword>
<protein>
    <recommendedName>
        <fullName>Sex comb on midleg-like protein 1</fullName>
    </recommendedName>
</protein>
<feature type="chain" id="PRO_0000380548" description="Sex comb on midleg-like protein 1">
    <location>
        <begin position="1"/>
        <end position="329"/>
    </location>
</feature>
<feature type="domain" description="SAM" evidence="3">
    <location>
        <begin position="258"/>
        <end position="325"/>
    </location>
</feature>
<feature type="region of interest" description="Disordered" evidence="4">
    <location>
        <begin position="138"/>
        <end position="157"/>
    </location>
</feature>
<feature type="modified residue" description="Phosphoserine" evidence="2">
    <location>
        <position position="138"/>
    </location>
</feature>
<feature type="modified residue" description="Phosphoserine" evidence="2">
    <location>
        <position position="238"/>
    </location>
</feature>